<organismHost>
    <name type="scientific">Bos taurus</name>
    <name type="common">Bovine</name>
    <dbReference type="NCBI Taxonomy" id="9913"/>
</organismHost>
<name>PG165_VACCW</name>
<sequence>MEIFPVFGISKISNFIANNDCRYYIDTEHQKIISDEINRQMDETVLLTNILSVEVVNDNEMYHLIPHRLSTIILCISSVGGCVISIDNDINDKNILTFPIDHAVIISPLSKCVVVSKGPTTILVVKADIPSKRLVTSFTNDILYVNNLSLINYLPLSVFIIRRVTDYLDRHICDQIFANNKWYSIITIDDKQYPIPSNCIGMSSAKYINSSIEQDTLIHVCNLEHPFDLVYKKMQSYNSVPIKEQILYGRIDNINMSISISVD</sequence>
<evidence type="ECO:0000305" key="1"/>
<dbReference type="EMBL" id="D11079">
    <property type="protein sequence ID" value="BAA01809.1"/>
    <property type="molecule type" value="Genomic_DNA"/>
</dbReference>
<dbReference type="EMBL" id="M61187">
    <property type="protein sequence ID" value="AAA48333.1"/>
    <property type="molecule type" value="Genomic_DNA"/>
</dbReference>
<dbReference type="EMBL" id="X57318">
    <property type="protein sequence ID" value="CAA40586.1"/>
    <property type="molecule type" value="Genomic_DNA"/>
</dbReference>
<dbReference type="EMBL" id="AY243312">
    <property type="protein sequence ID" value="AAO89439.1"/>
    <property type="molecule type" value="Genomic_DNA"/>
</dbReference>
<dbReference type="PIR" id="S29920">
    <property type="entry name" value="S29920"/>
</dbReference>
<dbReference type="RefSeq" id="YP_233042.1">
    <property type="nucleotide sequence ID" value="NC_006998.1"/>
</dbReference>
<dbReference type="DNASU" id="3707690"/>
<dbReference type="GeneID" id="3707690"/>
<dbReference type="KEGG" id="vg:3707690"/>
<dbReference type="Proteomes" id="UP000000344">
    <property type="component" value="Genome"/>
</dbReference>
<dbReference type="InterPro" id="IPR009641">
    <property type="entry name" value="Vaccinia_virus_A37"/>
</dbReference>
<dbReference type="Pfam" id="PF06822">
    <property type="entry name" value="DUF1235"/>
    <property type="match status" value="1"/>
</dbReference>
<protein>
    <recommendedName>
        <fullName>Protein OPG165</fullName>
    </recommendedName>
</protein>
<keyword id="KW-0244">Early protein</keyword>
<keyword id="KW-1185">Reference proteome</keyword>
<reference key="1">
    <citation type="journal article" date="1991" name="J. Gen. Virol.">
        <title>Nucleotide sequence of 42 kbp of vaccinia virus strain WR from near the right inverted terminal repeat.</title>
        <authorList>
            <person name="Smith G.L."/>
            <person name="Chan Y.S."/>
            <person name="Howard S.T."/>
        </authorList>
    </citation>
    <scope>NUCLEOTIDE SEQUENCE [GENOMIC DNA]</scope>
</reference>
<reference key="2">
    <citation type="journal article" date="1991" name="J. Biol. Chem.">
        <title>Identification, sequence, and expression of the gene encoding a Mr 35,000 subunit of the vaccinia virus DNA-dependent RNA polymerase.</title>
        <authorList>
            <person name="Amegadzie B.Y."/>
            <person name="Ahn B.-Y."/>
            <person name="Moss B."/>
        </authorList>
    </citation>
    <scope>NUCLEOTIDE SEQUENCE [GENOMIC DNA]</scope>
</reference>
<reference key="3">
    <citation type="submission" date="2003-02" db="EMBL/GenBank/DDBJ databases">
        <title>Sequencing of the coding region of Vaccinia-WR to an average 9-fold redundancy and an error rate of 0.16/10kb.</title>
        <authorList>
            <person name="Esposito J.J."/>
            <person name="Frace A.M."/>
            <person name="Sammons S.A."/>
            <person name="Olsen-Rasmussen M."/>
            <person name="Osborne J."/>
            <person name="Wohlhueter R."/>
        </authorList>
    </citation>
    <scope>NUCLEOTIDE SEQUENCE [LARGE SCALE GENOMIC DNA]</scope>
</reference>
<organism>
    <name type="scientific">Vaccinia virus (strain Western Reserve)</name>
    <name type="common">VACV</name>
    <name type="synonym">Vaccinia virus (strain WR)</name>
    <dbReference type="NCBI Taxonomy" id="10254"/>
    <lineage>
        <taxon>Viruses</taxon>
        <taxon>Varidnaviria</taxon>
        <taxon>Bamfordvirae</taxon>
        <taxon>Nucleocytoviricota</taxon>
        <taxon>Pokkesviricetes</taxon>
        <taxon>Chitovirales</taxon>
        <taxon>Poxviridae</taxon>
        <taxon>Chordopoxvirinae</taxon>
        <taxon>Orthopoxvirus</taxon>
        <taxon>Vaccinia virus</taxon>
    </lineage>
</organism>
<comment type="induction">
    <text>Expressed in the early phase of the viral replicative cycle.</text>
</comment>
<comment type="similarity">
    <text evidence="1">Belongs to the orthopoxvirus OPG165 family.</text>
</comment>
<accession>P24762</accession>
<accession>Q76ZN9</accession>
<gene>
    <name type="primary">OPG165</name>
    <name type="ordered locus">VACWR160</name>
    <name type="ORF">A37R</name>
</gene>
<feature type="chain" id="PRO_0000099323" description="Protein OPG165">
    <location>
        <begin position="1"/>
        <end position="263"/>
    </location>
</feature>
<proteinExistence type="evidence at transcript level"/>